<comment type="function">
    <text evidence="1">Could possibly oxidize fatty acids using specific components.</text>
</comment>
<comment type="catalytic activity">
    <reaction>
        <text>a (3S)-3-hydroxyacyl-CoA = a (2E)-enoyl-CoA + H2O</text>
        <dbReference type="Rhea" id="RHEA:16105"/>
        <dbReference type="ChEBI" id="CHEBI:15377"/>
        <dbReference type="ChEBI" id="CHEBI:57318"/>
        <dbReference type="ChEBI" id="CHEBI:58856"/>
        <dbReference type="EC" id="4.2.1.17"/>
    </reaction>
</comment>
<comment type="catalytic activity">
    <reaction>
        <text>a 4-saturated-(3S)-3-hydroxyacyl-CoA = a (3E)-enoyl-CoA + H2O</text>
        <dbReference type="Rhea" id="RHEA:20724"/>
        <dbReference type="ChEBI" id="CHEBI:15377"/>
        <dbReference type="ChEBI" id="CHEBI:58521"/>
        <dbReference type="ChEBI" id="CHEBI:137480"/>
        <dbReference type="EC" id="4.2.1.17"/>
    </reaction>
</comment>
<comment type="similarity">
    <text evidence="2">Belongs to the enoyl-CoA hydratase/isomerase family.</text>
</comment>
<dbReference type="EC" id="4.2.1.17"/>
<dbReference type="EMBL" id="U15184">
    <property type="protein sequence ID" value="AAA63046.1"/>
    <property type="molecule type" value="Genomic_DNA"/>
</dbReference>
<dbReference type="EMBL" id="AL583924">
    <property type="protein sequence ID" value="CAC31073.1"/>
    <property type="molecule type" value="Genomic_DNA"/>
</dbReference>
<dbReference type="PIR" id="A87174">
    <property type="entry name" value="A87174"/>
</dbReference>
<dbReference type="RefSeq" id="NP_302400.1">
    <property type="nucleotide sequence ID" value="NC_002677.1"/>
</dbReference>
<dbReference type="RefSeq" id="WP_010908720.1">
    <property type="nucleotide sequence ID" value="NC_002677.1"/>
</dbReference>
<dbReference type="SMR" id="Q50130"/>
<dbReference type="STRING" id="272631.gene:17575971"/>
<dbReference type="KEGG" id="mle:ML2118"/>
<dbReference type="PATRIC" id="fig|272631.5.peg.3996"/>
<dbReference type="Leproma" id="ML2118"/>
<dbReference type="eggNOG" id="COG1024">
    <property type="taxonomic scope" value="Bacteria"/>
</dbReference>
<dbReference type="HOGENOM" id="CLU_009834_7_2_11"/>
<dbReference type="OrthoDB" id="3569436at2"/>
<dbReference type="Proteomes" id="UP000000806">
    <property type="component" value="Chromosome"/>
</dbReference>
<dbReference type="GO" id="GO:0004300">
    <property type="term" value="F:enoyl-CoA hydratase activity"/>
    <property type="evidence" value="ECO:0007669"/>
    <property type="project" value="UniProtKB-EC"/>
</dbReference>
<dbReference type="GO" id="GO:0006635">
    <property type="term" value="P:fatty acid beta-oxidation"/>
    <property type="evidence" value="ECO:0007669"/>
    <property type="project" value="TreeGrafter"/>
</dbReference>
<dbReference type="CDD" id="cd06558">
    <property type="entry name" value="crotonase-like"/>
    <property type="match status" value="1"/>
</dbReference>
<dbReference type="Gene3D" id="3.90.226.10">
    <property type="entry name" value="2-enoyl-CoA Hydratase, Chain A, domain 1"/>
    <property type="match status" value="1"/>
</dbReference>
<dbReference type="InterPro" id="IPR029045">
    <property type="entry name" value="ClpP/crotonase-like_dom_sf"/>
</dbReference>
<dbReference type="InterPro" id="IPR018376">
    <property type="entry name" value="Enoyl-CoA_hyd/isom_CS"/>
</dbReference>
<dbReference type="InterPro" id="IPR001753">
    <property type="entry name" value="Enoyl-CoA_hydra/iso"/>
</dbReference>
<dbReference type="NCBIfam" id="NF005891">
    <property type="entry name" value="PRK07854.1"/>
    <property type="match status" value="1"/>
</dbReference>
<dbReference type="PANTHER" id="PTHR11941:SF169">
    <property type="entry name" value="(7AS)-7A-METHYL-1,5-DIOXO-2,3,5,6,7,7A-HEXAHYDRO-1H-INDENE-CARBOXYL-COA HYDROLASE"/>
    <property type="match status" value="1"/>
</dbReference>
<dbReference type="PANTHER" id="PTHR11941">
    <property type="entry name" value="ENOYL-COA HYDRATASE-RELATED"/>
    <property type="match status" value="1"/>
</dbReference>
<dbReference type="Pfam" id="PF00378">
    <property type="entry name" value="ECH_1"/>
    <property type="match status" value="1"/>
</dbReference>
<dbReference type="SUPFAM" id="SSF52096">
    <property type="entry name" value="ClpP/crotonase"/>
    <property type="match status" value="1"/>
</dbReference>
<dbReference type="PROSITE" id="PS00166">
    <property type="entry name" value="ENOYL_COA_HYDRATASE"/>
    <property type="match status" value="1"/>
</dbReference>
<sequence length="247" mass="26654">MIGITQAEGVMTIELQRPERRNALNSQLIEKLREAVQKASSADSEVSTRVIVLTGQGTVFCAGADLSGDAFAADYPDRLIELHRVMDAVPMPVIGAINGPAIGAGLQLAMQCDLRVVAPDAYFQFPTSKYGLALDNWSIRRLSSLVGHGRARAMLLTAEKLTADIALQTGMANRIGALADAQAWAAEVTGLAPLAIQHAKRVLNDDGSIEEAWPEHKKLFDKAWTSQDVIEAQVARVEKRPPKFQGA</sequence>
<organism>
    <name type="scientific">Mycobacterium leprae (strain TN)</name>
    <dbReference type="NCBI Taxonomy" id="272631"/>
    <lineage>
        <taxon>Bacteria</taxon>
        <taxon>Bacillati</taxon>
        <taxon>Actinomycetota</taxon>
        <taxon>Actinomycetes</taxon>
        <taxon>Mycobacteriales</taxon>
        <taxon>Mycobacteriaceae</taxon>
        <taxon>Mycobacterium</taxon>
    </lineage>
</organism>
<evidence type="ECO:0000250" key="1"/>
<evidence type="ECO:0000305" key="2"/>
<accession>Q50130</accession>
<protein>
    <recommendedName>
        <fullName>Probable enoyl-CoA hydratase echA6</fullName>
        <ecNumber>4.2.1.17</ecNumber>
    </recommendedName>
</protein>
<feature type="chain" id="PRO_0000109334" description="Probable enoyl-CoA hydratase echA6">
    <location>
        <begin position="1"/>
        <end position="247"/>
    </location>
</feature>
<name>ECHA6_MYCLE</name>
<reference key="1">
    <citation type="submission" date="1994-09" db="EMBL/GenBank/DDBJ databases">
        <authorList>
            <person name="Smith D.R."/>
            <person name="Robison K."/>
        </authorList>
    </citation>
    <scope>NUCLEOTIDE SEQUENCE [GENOMIC DNA]</scope>
</reference>
<reference key="2">
    <citation type="journal article" date="2001" name="Nature">
        <title>Massive gene decay in the leprosy bacillus.</title>
        <authorList>
            <person name="Cole S.T."/>
            <person name="Eiglmeier K."/>
            <person name="Parkhill J."/>
            <person name="James K.D."/>
            <person name="Thomson N.R."/>
            <person name="Wheeler P.R."/>
            <person name="Honore N."/>
            <person name="Garnier T."/>
            <person name="Churcher C.M."/>
            <person name="Harris D.E."/>
            <person name="Mungall K.L."/>
            <person name="Basham D."/>
            <person name="Brown D."/>
            <person name="Chillingworth T."/>
            <person name="Connor R."/>
            <person name="Davies R.M."/>
            <person name="Devlin K."/>
            <person name="Duthoy S."/>
            <person name="Feltwell T."/>
            <person name="Fraser A."/>
            <person name="Hamlin N."/>
            <person name="Holroyd S."/>
            <person name="Hornsby T."/>
            <person name="Jagels K."/>
            <person name="Lacroix C."/>
            <person name="Maclean J."/>
            <person name="Moule S."/>
            <person name="Murphy L.D."/>
            <person name="Oliver K."/>
            <person name="Quail M.A."/>
            <person name="Rajandream M.A."/>
            <person name="Rutherford K.M."/>
            <person name="Rutter S."/>
            <person name="Seeger K."/>
            <person name="Simon S."/>
            <person name="Simmonds M."/>
            <person name="Skelton J."/>
            <person name="Squares R."/>
            <person name="Squares S."/>
            <person name="Stevens K."/>
            <person name="Taylor K."/>
            <person name="Whitehead S."/>
            <person name="Woodward J.R."/>
            <person name="Barrell B.G."/>
        </authorList>
    </citation>
    <scope>NUCLEOTIDE SEQUENCE [LARGE SCALE GENOMIC DNA]</scope>
    <source>
        <strain>TN</strain>
    </source>
</reference>
<proteinExistence type="inferred from homology"/>
<keyword id="KW-0276">Fatty acid metabolism</keyword>
<keyword id="KW-0443">Lipid metabolism</keyword>
<keyword id="KW-0456">Lyase</keyword>
<keyword id="KW-1185">Reference proteome</keyword>
<gene>
    <name type="primary">echA6</name>
    <name type="ordered locus">ML2118</name>
    <name type="ORF">u650af</name>
</gene>